<name>IBBWP_MAIZE</name>
<proteinExistence type="evidence at transcript level"/>
<protein>
    <recommendedName>
        <fullName>Bowman-Birk type wound-induced proteinase inhibitor WIP1</fullName>
    </recommendedName>
</protein>
<evidence type="ECO:0000250" key="1"/>
<evidence type="ECO:0000250" key="2">
    <source>
        <dbReference type="UniProtKB" id="P80321"/>
    </source>
</evidence>
<evidence type="ECO:0000255" key="3"/>
<evidence type="ECO:0000305" key="4"/>
<reference key="1">
    <citation type="journal article" date="1993" name="Plant Mol. Biol.">
        <title>WIP1, a wound-inducible gene from maize with homology to Bowman-Birk proteinase inhibitors.</title>
        <authorList>
            <person name="Rohrmeier T."/>
            <person name="Lehle L."/>
        </authorList>
    </citation>
    <scope>NUCLEOTIDE SEQUENCE [MRNA]</scope>
    <source>
        <strain>cv. Brio</strain>
    </source>
</reference>
<reference key="2">
    <citation type="journal article" date="1993" name="FEBS Lett.">
        <title>Wound-induced systemic accumulation of a transcript coding for a Bowman-Birk trypsin inhibitor-related protein in maize (Zea mays L.) seedlings.</title>
        <authorList>
            <person name="Eckelkamp C."/>
            <person name="Ehmann B."/>
            <person name="Schopfer P."/>
        </authorList>
    </citation>
    <scope>NUCLEOTIDE SEQUENCE [MRNA]</scope>
    <source>
        <strain>cv. Brio</strain>
        <tissue>Seedling</tissue>
    </source>
</reference>
<sequence length="102" mass="10976">MKSSPHLVLILCLQAALVMGVFAALAKENAMVESKAIDINPGQLKCCTNCNFSFSGLYTCDDVKKDCDPVCKKCVVAVHASYSGNNKFRCTDTFLGMCGPKC</sequence>
<dbReference type="EMBL" id="X71396">
    <property type="protein sequence ID" value="CAA50519.1"/>
    <property type="molecule type" value="mRNA"/>
</dbReference>
<dbReference type="PIR" id="S36236">
    <property type="entry name" value="S36236"/>
</dbReference>
<dbReference type="FunCoup" id="P31862">
    <property type="interactions" value="672"/>
</dbReference>
<dbReference type="STRING" id="4577.P31862"/>
<dbReference type="MEROPS" id="I12.019"/>
<dbReference type="PaxDb" id="4577-GRMZM2G156632_P01"/>
<dbReference type="MaizeGDB" id="46002"/>
<dbReference type="eggNOG" id="ENOG502R3J3">
    <property type="taxonomic scope" value="Eukaryota"/>
</dbReference>
<dbReference type="InParanoid" id="P31862"/>
<dbReference type="Proteomes" id="UP000007305">
    <property type="component" value="Unplaced"/>
</dbReference>
<dbReference type="ExpressionAtlas" id="P31862">
    <property type="expression patterns" value="baseline and differential"/>
</dbReference>
<dbReference type="GO" id="GO:0005576">
    <property type="term" value="C:extracellular region"/>
    <property type="evidence" value="ECO:0007669"/>
    <property type="project" value="InterPro"/>
</dbReference>
<dbReference type="GO" id="GO:0004867">
    <property type="term" value="F:serine-type endopeptidase inhibitor activity"/>
    <property type="evidence" value="ECO:0007669"/>
    <property type="project" value="UniProtKB-KW"/>
</dbReference>
<dbReference type="CDD" id="cd00023">
    <property type="entry name" value="BBI"/>
    <property type="match status" value="1"/>
</dbReference>
<dbReference type="Gene3D" id="2.10.69.10">
    <property type="entry name" value="Cysteine Protease (Bromelain) Inhibitor, subunit H"/>
    <property type="match status" value="1"/>
</dbReference>
<dbReference type="InterPro" id="IPR035995">
    <property type="entry name" value="Bowman-Birk_prot_inh"/>
</dbReference>
<dbReference type="InterPro" id="IPR000877">
    <property type="entry name" value="Prot_inh_BBI"/>
</dbReference>
<dbReference type="InterPro" id="IPR044167">
    <property type="entry name" value="WIP1"/>
</dbReference>
<dbReference type="PANTHER" id="PTHR37378:SF2">
    <property type="entry name" value="BOWMAN-BIRK TYPE WOUND-INDUCED PROTEINASE INHIBITOR WIP1"/>
    <property type="match status" value="1"/>
</dbReference>
<dbReference type="PANTHER" id="PTHR37378">
    <property type="entry name" value="BOWMAN_BIRK DOMAIN-CONTAINING PROTEIN-RELATED"/>
    <property type="match status" value="1"/>
</dbReference>
<dbReference type="Pfam" id="PF00228">
    <property type="entry name" value="Bowman-Birk_leg"/>
    <property type="match status" value="1"/>
</dbReference>
<dbReference type="SMART" id="SM00269">
    <property type="entry name" value="BowB"/>
    <property type="match status" value="1"/>
</dbReference>
<dbReference type="SUPFAM" id="SSF57247">
    <property type="entry name" value="Bowman-Birk inhibitor, BBI"/>
    <property type="match status" value="1"/>
</dbReference>
<dbReference type="PROSITE" id="PS00281">
    <property type="entry name" value="BOWMAN_BIRK"/>
    <property type="match status" value="1"/>
</dbReference>
<comment type="induction">
    <text>By wounding.</text>
</comment>
<comment type="similarity">
    <text evidence="4">Belongs to the Bowman-Birk serine protease inhibitor family.</text>
</comment>
<feature type="signal peptide" evidence="3">
    <location>
        <begin position="1"/>
        <end position="15"/>
    </location>
</feature>
<feature type="chain" id="PRO_0000003270" description="Bowman-Birk type wound-induced proteinase inhibitor WIP1">
    <location>
        <begin position="16"/>
        <end position="102"/>
    </location>
</feature>
<feature type="site" description="Reactive bond" evidence="1">
    <location>
        <begin position="52"/>
        <end position="53"/>
    </location>
</feature>
<feature type="disulfide bond" evidence="2">
    <location>
        <begin position="46"/>
        <end position="102"/>
    </location>
</feature>
<feature type="disulfide bond" evidence="2">
    <location>
        <begin position="47"/>
        <end position="60"/>
    </location>
</feature>
<feature type="disulfide bond" evidence="2">
    <location>
        <begin position="50"/>
        <end position="98"/>
    </location>
</feature>
<feature type="disulfide bond" evidence="2">
    <location>
        <begin position="67"/>
        <end position="74"/>
    </location>
</feature>
<feature type="disulfide bond" evidence="2">
    <location>
        <begin position="71"/>
        <end position="90"/>
    </location>
</feature>
<feature type="sequence conflict" description="In Ref. 2; no nucleotide entry." evidence="4" ref="2">
    <original>L</original>
    <variation>V</variation>
    <location>
        <position position="11"/>
    </location>
</feature>
<gene>
    <name type="primary">WIP1</name>
</gene>
<organism>
    <name type="scientific">Zea mays</name>
    <name type="common">Maize</name>
    <dbReference type="NCBI Taxonomy" id="4577"/>
    <lineage>
        <taxon>Eukaryota</taxon>
        <taxon>Viridiplantae</taxon>
        <taxon>Streptophyta</taxon>
        <taxon>Embryophyta</taxon>
        <taxon>Tracheophyta</taxon>
        <taxon>Spermatophyta</taxon>
        <taxon>Magnoliopsida</taxon>
        <taxon>Liliopsida</taxon>
        <taxon>Poales</taxon>
        <taxon>Poaceae</taxon>
        <taxon>PACMAD clade</taxon>
        <taxon>Panicoideae</taxon>
        <taxon>Andropogonodae</taxon>
        <taxon>Andropogoneae</taxon>
        <taxon>Tripsacinae</taxon>
        <taxon>Zea</taxon>
    </lineage>
</organism>
<keyword id="KW-1015">Disulfide bond</keyword>
<keyword id="KW-0646">Protease inhibitor</keyword>
<keyword id="KW-1185">Reference proteome</keyword>
<keyword id="KW-0722">Serine protease inhibitor</keyword>
<keyword id="KW-0732">Signal</keyword>
<accession>P31862</accession>